<feature type="chain" id="PRO_0000086037" description="Serine/threonine-protein kinase ISR1">
    <location>
        <begin position="1"/>
        <end position="342"/>
    </location>
</feature>
<feature type="domain" description="Protein kinase" evidence="2">
    <location>
        <begin position="59"/>
        <end position="342"/>
    </location>
</feature>
<feature type="active site" description="Proton acceptor" evidence="2 3">
    <location>
        <position position="190"/>
    </location>
</feature>
<feature type="binding site" evidence="2">
    <location>
        <begin position="65"/>
        <end position="73"/>
    </location>
    <ligand>
        <name>ATP</name>
        <dbReference type="ChEBI" id="CHEBI:30616"/>
    </ligand>
</feature>
<feature type="binding site" evidence="2">
    <location>
        <position position="84"/>
    </location>
    <ligand>
        <name>ATP</name>
        <dbReference type="ChEBI" id="CHEBI:30616"/>
    </ligand>
</feature>
<gene>
    <name type="primary">ISR1</name>
    <name type="ordered locus">AEL330C</name>
</gene>
<organism>
    <name type="scientific">Eremothecium gossypii (strain ATCC 10895 / CBS 109.51 / FGSC 9923 / NRRL Y-1056)</name>
    <name type="common">Yeast</name>
    <name type="synonym">Ashbya gossypii</name>
    <dbReference type="NCBI Taxonomy" id="284811"/>
    <lineage>
        <taxon>Eukaryota</taxon>
        <taxon>Fungi</taxon>
        <taxon>Dikarya</taxon>
        <taxon>Ascomycota</taxon>
        <taxon>Saccharomycotina</taxon>
        <taxon>Saccharomycetes</taxon>
        <taxon>Saccharomycetales</taxon>
        <taxon>Saccharomycetaceae</taxon>
        <taxon>Eremothecium</taxon>
    </lineage>
</organism>
<protein>
    <recommendedName>
        <fullName>Serine/threonine-protein kinase ISR1</fullName>
        <ecNumber>2.7.11.1</ecNumber>
    </recommendedName>
</protein>
<dbReference type="EC" id="2.7.11.1"/>
<dbReference type="EMBL" id="AE016818">
    <property type="protein sequence ID" value="AAS52354.2"/>
    <property type="molecule type" value="Genomic_DNA"/>
</dbReference>
<dbReference type="RefSeq" id="NP_984530.2">
    <property type="nucleotide sequence ID" value="NM_209883.2"/>
</dbReference>
<dbReference type="SMR" id="Q758T2"/>
<dbReference type="FunCoup" id="Q758T2">
    <property type="interactions" value="282"/>
</dbReference>
<dbReference type="EnsemblFungi" id="AAS52354">
    <property type="protein sequence ID" value="AAS52354"/>
    <property type="gene ID" value="AGOS_AEL330C"/>
</dbReference>
<dbReference type="GeneID" id="4620700"/>
<dbReference type="KEGG" id="ago:AGOS_AEL330C"/>
<dbReference type="eggNOG" id="ENOG502RW7G">
    <property type="taxonomic scope" value="Eukaryota"/>
</dbReference>
<dbReference type="HOGENOM" id="CLU_811270_0_0_1"/>
<dbReference type="InParanoid" id="Q758T2"/>
<dbReference type="OMA" id="LHETQWL"/>
<dbReference type="OrthoDB" id="1668230at2759"/>
<dbReference type="Proteomes" id="UP000000591">
    <property type="component" value="Chromosome V"/>
</dbReference>
<dbReference type="GO" id="GO:0005524">
    <property type="term" value="F:ATP binding"/>
    <property type="evidence" value="ECO:0007669"/>
    <property type="project" value="UniProtKB-KW"/>
</dbReference>
<dbReference type="GO" id="GO:0106310">
    <property type="term" value="F:protein serine kinase activity"/>
    <property type="evidence" value="ECO:0007669"/>
    <property type="project" value="RHEA"/>
</dbReference>
<dbReference type="GO" id="GO:0004674">
    <property type="term" value="F:protein serine/threonine kinase activity"/>
    <property type="evidence" value="ECO:0000318"/>
    <property type="project" value="GO_Central"/>
</dbReference>
<dbReference type="Gene3D" id="1.10.510.10">
    <property type="entry name" value="Transferase(Phosphotransferase) domain 1"/>
    <property type="match status" value="1"/>
</dbReference>
<dbReference type="InterPro" id="IPR011009">
    <property type="entry name" value="Kinase-like_dom_sf"/>
</dbReference>
<dbReference type="InterPro" id="IPR000719">
    <property type="entry name" value="Prot_kinase_dom"/>
</dbReference>
<dbReference type="InterPro" id="IPR008271">
    <property type="entry name" value="Ser/Thr_kinase_AS"/>
</dbReference>
<dbReference type="InterPro" id="IPR053235">
    <property type="entry name" value="Ser_Thr_kinase"/>
</dbReference>
<dbReference type="PANTHER" id="PTHR24361">
    <property type="entry name" value="MITOGEN-ACTIVATED KINASE KINASE KINASE"/>
    <property type="match status" value="1"/>
</dbReference>
<dbReference type="PANTHER" id="PTHR24361:SF433">
    <property type="entry name" value="PROTEIN KINASE DOMAIN-CONTAINING PROTEIN"/>
    <property type="match status" value="1"/>
</dbReference>
<dbReference type="Pfam" id="PF00069">
    <property type="entry name" value="Pkinase"/>
    <property type="match status" value="1"/>
</dbReference>
<dbReference type="SMART" id="SM00220">
    <property type="entry name" value="S_TKc"/>
    <property type="match status" value="1"/>
</dbReference>
<dbReference type="SUPFAM" id="SSF56112">
    <property type="entry name" value="Protein kinase-like (PK-like)"/>
    <property type="match status" value="1"/>
</dbReference>
<dbReference type="PROSITE" id="PS50011">
    <property type="entry name" value="PROTEIN_KINASE_DOM"/>
    <property type="match status" value="1"/>
</dbReference>
<dbReference type="PROSITE" id="PS00108">
    <property type="entry name" value="PROTEIN_KINASE_ST"/>
    <property type="match status" value="1"/>
</dbReference>
<name>ISR1_EREGS</name>
<reference key="1">
    <citation type="journal article" date="2004" name="Science">
        <title>The Ashbya gossypii genome as a tool for mapping the ancient Saccharomyces cerevisiae genome.</title>
        <authorList>
            <person name="Dietrich F.S."/>
            <person name="Voegeli S."/>
            <person name="Brachat S."/>
            <person name="Lerch A."/>
            <person name="Gates K."/>
            <person name="Steiner S."/>
            <person name="Mohr C."/>
            <person name="Poehlmann R."/>
            <person name="Luedi P."/>
            <person name="Choi S."/>
            <person name="Wing R.A."/>
            <person name="Flavier A."/>
            <person name="Gaffney T.D."/>
            <person name="Philippsen P."/>
        </authorList>
    </citation>
    <scope>NUCLEOTIDE SEQUENCE [LARGE SCALE GENOMIC DNA]</scope>
    <source>
        <strain>ATCC 10895 / CBS 109.51 / FGSC 9923 / NRRL Y-1056</strain>
    </source>
</reference>
<reference key="2">
    <citation type="journal article" date="2013" name="G3 (Bethesda)">
        <title>Genomes of Ashbya fungi isolated from insects reveal four mating-type loci, numerous translocations, lack of transposons, and distinct gene duplications.</title>
        <authorList>
            <person name="Dietrich F.S."/>
            <person name="Voegeli S."/>
            <person name="Kuo S."/>
            <person name="Philippsen P."/>
        </authorList>
    </citation>
    <scope>GENOME REANNOTATION</scope>
    <source>
        <strain>ATCC 10895 / CBS 109.51 / FGSC 9923 / NRRL Y-1056</strain>
    </source>
</reference>
<sequence length="342" mass="37967">MSAWASQEAAKEEEAVGDFARMLERRDAGLLARVLSRAQTGPEAYVRGLWRAEVGLERWRLTRVLGCGSVACVFELGDGALALKVPTSRRKAPVLLHEVLIYSHLAQQAGGRLAERHVVPFHGVAAVTRREYRRLRGGEVVPALVLERMDTTLEAVHRRAAVSKGQWWRYARDLVAALQFLRESCVVHGDIKTANVLVRGQDAFLADFTSAAVCDAAPEPLTTTLEYCAPGLIGGGQPTHSTDVYAAGLCLLALITRFEPFRELSMMKSHSSAPTHSLHETQWLMNAISKGDPIKYNVLSQDLYDRWAEELHFLRRFFVPAAQDALSRWLAESNARVAEHAF</sequence>
<comment type="function">
    <text evidence="1">Probable serine/threonine protein kinase which may function redundantly with MPK1-independent branch of the PCK1 pathway.</text>
</comment>
<comment type="catalytic activity">
    <reaction>
        <text>L-seryl-[protein] + ATP = O-phospho-L-seryl-[protein] + ADP + H(+)</text>
        <dbReference type="Rhea" id="RHEA:17989"/>
        <dbReference type="Rhea" id="RHEA-COMP:9863"/>
        <dbReference type="Rhea" id="RHEA-COMP:11604"/>
        <dbReference type="ChEBI" id="CHEBI:15378"/>
        <dbReference type="ChEBI" id="CHEBI:29999"/>
        <dbReference type="ChEBI" id="CHEBI:30616"/>
        <dbReference type="ChEBI" id="CHEBI:83421"/>
        <dbReference type="ChEBI" id="CHEBI:456216"/>
        <dbReference type="EC" id="2.7.11.1"/>
    </reaction>
</comment>
<comment type="catalytic activity">
    <reaction>
        <text>L-threonyl-[protein] + ATP = O-phospho-L-threonyl-[protein] + ADP + H(+)</text>
        <dbReference type="Rhea" id="RHEA:46608"/>
        <dbReference type="Rhea" id="RHEA-COMP:11060"/>
        <dbReference type="Rhea" id="RHEA-COMP:11605"/>
        <dbReference type="ChEBI" id="CHEBI:15378"/>
        <dbReference type="ChEBI" id="CHEBI:30013"/>
        <dbReference type="ChEBI" id="CHEBI:30616"/>
        <dbReference type="ChEBI" id="CHEBI:61977"/>
        <dbReference type="ChEBI" id="CHEBI:456216"/>
        <dbReference type="EC" id="2.7.11.1"/>
    </reaction>
</comment>
<comment type="similarity">
    <text evidence="2">Belongs to the protein kinase superfamily. Ser/Thr protein kinase family.</text>
</comment>
<keyword id="KW-0067">ATP-binding</keyword>
<keyword id="KW-0418">Kinase</keyword>
<keyword id="KW-0547">Nucleotide-binding</keyword>
<keyword id="KW-1185">Reference proteome</keyword>
<keyword id="KW-0723">Serine/threonine-protein kinase</keyword>
<keyword id="KW-0808">Transferase</keyword>
<accession>Q758T2</accession>
<evidence type="ECO:0000250" key="1"/>
<evidence type="ECO:0000255" key="2">
    <source>
        <dbReference type="PROSITE-ProRule" id="PRU00159"/>
    </source>
</evidence>
<evidence type="ECO:0000255" key="3">
    <source>
        <dbReference type="PROSITE-ProRule" id="PRU10027"/>
    </source>
</evidence>
<proteinExistence type="inferred from homology"/>